<keyword id="KW-0131">Cell cycle</keyword>
<keyword id="KW-0132">Cell division</keyword>
<keyword id="KW-0143">Chaperone</keyword>
<keyword id="KW-0963">Cytoplasm</keyword>
<keyword id="KW-0413">Isomerase</keyword>
<keyword id="KW-0697">Rotamase</keyword>
<comment type="function">
    <text evidence="1">Involved in protein export. Acts as a chaperone by maintaining the newly synthesized protein in an open conformation. Functions as a peptidyl-prolyl cis-trans isomerase.</text>
</comment>
<comment type="catalytic activity">
    <reaction evidence="1">
        <text>[protein]-peptidylproline (omega=180) = [protein]-peptidylproline (omega=0)</text>
        <dbReference type="Rhea" id="RHEA:16237"/>
        <dbReference type="Rhea" id="RHEA-COMP:10747"/>
        <dbReference type="Rhea" id="RHEA-COMP:10748"/>
        <dbReference type="ChEBI" id="CHEBI:83833"/>
        <dbReference type="ChEBI" id="CHEBI:83834"/>
        <dbReference type="EC" id="5.2.1.8"/>
    </reaction>
</comment>
<comment type="subcellular location">
    <subcellularLocation>
        <location>Cytoplasm</location>
    </subcellularLocation>
    <text evidence="1">About half TF is bound to the ribosome near the polypeptide exit tunnel while the other half is free in the cytoplasm.</text>
</comment>
<comment type="domain">
    <text evidence="1">Consists of 3 domains; the N-terminus binds the ribosome, the middle domain has PPIase activity, while the C-terminus has intrinsic chaperone activity on its own.</text>
</comment>
<comment type="similarity">
    <text evidence="1">Belongs to the FKBP-type PPIase family. Tig subfamily.</text>
</comment>
<accession>C4XH04</accession>
<feature type="chain" id="PRO_1000204985" description="Trigger factor">
    <location>
        <begin position="1"/>
        <end position="440"/>
    </location>
</feature>
<feature type="domain" description="PPIase FKBP-type" evidence="1">
    <location>
        <begin position="163"/>
        <end position="248"/>
    </location>
</feature>
<dbReference type="EC" id="5.2.1.8" evidence="1"/>
<dbReference type="EMBL" id="AP010904">
    <property type="protein sequence ID" value="BAH76309.1"/>
    <property type="molecule type" value="Genomic_DNA"/>
</dbReference>
<dbReference type="RefSeq" id="WP_015861474.1">
    <property type="nucleotide sequence ID" value="NC_012796.1"/>
</dbReference>
<dbReference type="SMR" id="C4XH04"/>
<dbReference type="STRING" id="573370.DMR_28180"/>
<dbReference type="KEGG" id="dma:DMR_28180"/>
<dbReference type="eggNOG" id="COG0544">
    <property type="taxonomic scope" value="Bacteria"/>
</dbReference>
<dbReference type="HOGENOM" id="CLU_033058_3_1_7"/>
<dbReference type="OrthoDB" id="9767721at2"/>
<dbReference type="Proteomes" id="UP000009071">
    <property type="component" value="Chromosome"/>
</dbReference>
<dbReference type="GO" id="GO:0005737">
    <property type="term" value="C:cytoplasm"/>
    <property type="evidence" value="ECO:0007669"/>
    <property type="project" value="UniProtKB-SubCell"/>
</dbReference>
<dbReference type="GO" id="GO:0003755">
    <property type="term" value="F:peptidyl-prolyl cis-trans isomerase activity"/>
    <property type="evidence" value="ECO:0007669"/>
    <property type="project" value="UniProtKB-UniRule"/>
</dbReference>
<dbReference type="GO" id="GO:0051301">
    <property type="term" value="P:cell division"/>
    <property type="evidence" value="ECO:0007669"/>
    <property type="project" value="UniProtKB-KW"/>
</dbReference>
<dbReference type="GO" id="GO:0006457">
    <property type="term" value="P:protein folding"/>
    <property type="evidence" value="ECO:0007669"/>
    <property type="project" value="UniProtKB-UniRule"/>
</dbReference>
<dbReference type="GO" id="GO:0015031">
    <property type="term" value="P:protein transport"/>
    <property type="evidence" value="ECO:0007669"/>
    <property type="project" value="UniProtKB-UniRule"/>
</dbReference>
<dbReference type="Gene3D" id="3.10.50.40">
    <property type="match status" value="1"/>
</dbReference>
<dbReference type="Gene3D" id="3.30.70.1050">
    <property type="entry name" value="Trigger factor ribosome-binding domain"/>
    <property type="match status" value="1"/>
</dbReference>
<dbReference type="Gene3D" id="1.10.3120.10">
    <property type="entry name" value="Trigger factor, C-terminal domain"/>
    <property type="match status" value="1"/>
</dbReference>
<dbReference type="HAMAP" id="MF_00303">
    <property type="entry name" value="Trigger_factor_Tig"/>
    <property type="match status" value="1"/>
</dbReference>
<dbReference type="InterPro" id="IPR046357">
    <property type="entry name" value="PPIase_dom_sf"/>
</dbReference>
<dbReference type="InterPro" id="IPR001179">
    <property type="entry name" value="PPIase_FKBP_dom"/>
</dbReference>
<dbReference type="InterPro" id="IPR005215">
    <property type="entry name" value="Trig_fac"/>
</dbReference>
<dbReference type="InterPro" id="IPR008880">
    <property type="entry name" value="Trigger_fac_C"/>
</dbReference>
<dbReference type="InterPro" id="IPR037041">
    <property type="entry name" value="Trigger_fac_C_sf"/>
</dbReference>
<dbReference type="InterPro" id="IPR008881">
    <property type="entry name" value="Trigger_fac_ribosome-bd_bac"/>
</dbReference>
<dbReference type="InterPro" id="IPR036611">
    <property type="entry name" value="Trigger_fac_ribosome-bd_sf"/>
</dbReference>
<dbReference type="InterPro" id="IPR027304">
    <property type="entry name" value="Trigger_fact/SurA_dom_sf"/>
</dbReference>
<dbReference type="NCBIfam" id="TIGR00115">
    <property type="entry name" value="tig"/>
    <property type="match status" value="1"/>
</dbReference>
<dbReference type="Pfam" id="PF00254">
    <property type="entry name" value="FKBP_C"/>
    <property type="match status" value="1"/>
</dbReference>
<dbReference type="Pfam" id="PF05698">
    <property type="entry name" value="Trigger_C"/>
    <property type="match status" value="1"/>
</dbReference>
<dbReference type="Pfam" id="PF05697">
    <property type="entry name" value="Trigger_N"/>
    <property type="match status" value="1"/>
</dbReference>
<dbReference type="PIRSF" id="PIRSF003095">
    <property type="entry name" value="Trigger_factor"/>
    <property type="match status" value="1"/>
</dbReference>
<dbReference type="SUPFAM" id="SSF54534">
    <property type="entry name" value="FKBP-like"/>
    <property type="match status" value="1"/>
</dbReference>
<dbReference type="SUPFAM" id="SSF109998">
    <property type="entry name" value="Triger factor/SurA peptide-binding domain-like"/>
    <property type="match status" value="1"/>
</dbReference>
<dbReference type="SUPFAM" id="SSF102735">
    <property type="entry name" value="Trigger factor ribosome-binding domain"/>
    <property type="match status" value="1"/>
</dbReference>
<evidence type="ECO:0000255" key="1">
    <source>
        <dbReference type="HAMAP-Rule" id="MF_00303"/>
    </source>
</evidence>
<proteinExistence type="inferred from homology"/>
<name>TIG_SOLM1</name>
<sequence>MEYTVNQLSPVKTQVTVSVPAEEANAALASAVAMFRSRTDLKGFRKGKVPSSVVEQRFKKEIVSEATTDLINVHINEIMGELKLSPLSGLDVSEAALTKGEPLEYTFSFEHAPAFDLPEYKGQAVEEEDVVVSEADIESVIERVRKNLAEVKPLSDNRPAKDGEIVSVTFEAFEDGKAIPGVRAENFELTLGEGQALPAFEELVKTIASGNEGEGDVTFPADFINTELAGRTVTMKVAVHVIKERTLPPVDDELAKKAGNFENLDKMREAITMSYKKSREDLHRSSAQKKLLDSLLATLDFPLPPAVVEQQLGQMVEEFVGQLERRGKSLESTGKTLADIQGEMRPRAEELVKTQIFLSAVALKEELTVTPQEMDAFFYRLSTQAGQDVIMLKRYYEDNGLMIMVRDKLLCDKAADLIYANALVTKVAPVEKPAGEEAQD</sequence>
<reference key="1">
    <citation type="journal article" date="2009" name="Genome Res.">
        <title>Whole genome sequence of Desulfovibrio magneticus strain RS-1 revealed common gene clusters in magnetotactic bacteria.</title>
        <authorList>
            <person name="Nakazawa H."/>
            <person name="Arakaki A."/>
            <person name="Narita-Yamada S."/>
            <person name="Yashiro I."/>
            <person name="Jinno K."/>
            <person name="Aoki N."/>
            <person name="Tsuruyama A."/>
            <person name="Okamura Y."/>
            <person name="Tanikawa S."/>
            <person name="Fujita N."/>
            <person name="Takeyama H."/>
            <person name="Matsunaga T."/>
        </authorList>
    </citation>
    <scope>NUCLEOTIDE SEQUENCE [LARGE SCALE GENOMIC DNA]</scope>
    <source>
        <strain>ATCC 700980 / DSM 13731 / RS-1</strain>
    </source>
</reference>
<organism>
    <name type="scientific">Solidesulfovibrio magneticus (strain ATCC 700980 / DSM 13731 / RS-1)</name>
    <name type="common">Desulfovibrio magneticus</name>
    <dbReference type="NCBI Taxonomy" id="573370"/>
    <lineage>
        <taxon>Bacteria</taxon>
        <taxon>Pseudomonadati</taxon>
        <taxon>Thermodesulfobacteriota</taxon>
        <taxon>Desulfovibrionia</taxon>
        <taxon>Desulfovibrionales</taxon>
        <taxon>Desulfovibrionaceae</taxon>
        <taxon>Solidesulfovibrio</taxon>
    </lineage>
</organism>
<protein>
    <recommendedName>
        <fullName evidence="1">Trigger factor</fullName>
        <shortName evidence="1">TF</shortName>
        <ecNumber evidence="1">5.2.1.8</ecNumber>
    </recommendedName>
    <alternativeName>
        <fullName evidence="1">PPIase</fullName>
    </alternativeName>
</protein>
<gene>
    <name evidence="1" type="primary">tig</name>
    <name type="ordered locus">DMR_28180</name>
</gene>